<gene>
    <name evidence="6" type="primary">Rac2</name>
</gene>
<reference key="1">
    <citation type="journal article" date="1990" name="Oncogene">
        <title>A member of the ras gene superfamily is expressed specifically in T, B and myeloid hemopoietic cells.</title>
        <authorList>
            <person name="Shirsat N.V."/>
            <person name="Pignolo R.J."/>
            <person name="Kreider B.L."/>
            <person name="Rovera G."/>
        </authorList>
    </citation>
    <scope>NUCLEOTIDE SEQUENCE [MRNA]</scope>
</reference>
<reference key="2">
    <citation type="journal article" date="2005" name="Science">
        <title>The transcriptional landscape of the mammalian genome.</title>
        <authorList>
            <person name="Carninci P."/>
            <person name="Kasukawa T."/>
            <person name="Katayama S."/>
            <person name="Gough J."/>
            <person name="Frith M.C."/>
            <person name="Maeda N."/>
            <person name="Oyama R."/>
            <person name="Ravasi T."/>
            <person name="Lenhard B."/>
            <person name="Wells C."/>
            <person name="Kodzius R."/>
            <person name="Shimokawa K."/>
            <person name="Bajic V.B."/>
            <person name="Brenner S.E."/>
            <person name="Batalov S."/>
            <person name="Forrest A.R."/>
            <person name="Zavolan M."/>
            <person name="Davis M.J."/>
            <person name="Wilming L.G."/>
            <person name="Aidinis V."/>
            <person name="Allen J.E."/>
            <person name="Ambesi-Impiombato A."/>
            <person name="Apweiler R."/>
            <person name="Aturaliya R.N."/>
            <person name="Bailey T.L."/>
            <person name="Bansal M."/>
            <person name="Baxter L."/>
            <person name="Beisel K.W."/>
            <person name="Bersano T."/>
            <person name="Bono H."/>
            <person name="Chalk A.M."/>
            <person name="Chiu K.P."/>
            <person name="Choudhary V."/>
            <person name="Christoffels A."/>
            <person name="Clutterbuck D.R."/>
            <person name="Crowe M.L."/>
            <person name="Dalla E."/>
            <person name="Dalrymple B.P."/>
            <person name="de Bono B."/>
            <person name="Della Gatta G."/>
            <person name="di Bernardo D."/>
            <person name="Down T."/>
            <person name="Engstrom P."/>
            <person name="Fagiolini M."/>
            <person name="Faulkner G."/>
            <person name="Fletcher C.F."/>
            <person name="Fukushima T."/>
            <person name="Furuno M."/>
            <person name="Futaki S."/>
            <person name="Gariboldi M."/>
            <person name="Georgii-Hemming P."/>
            <person name="Gingeras T.R."/>
            <person name="Gojobori T."/>
            <person name="Green R.E."/>
            <person name="Gustincich S."/>
            <person name="Harbers M."/>
            <person name="Hayashi Y."/>
            <person name="Hensch T.K."/>
            <person name="Hirokawa N."/>
            <person name="Hill D."/>
            <person name="Huminiecki L."/>
            <person name="Iacono M."/>
            <person name="Ikeo K."/>
            <person name="Iwama A."/>
            <person name="Ishikawa T."/>
            <person name="Jakt M."/>
            <person name="Kanapin A."/>
            <person name="Katoh M."/>
            <person name="Kawasawa Y."/>
            <person name="Kelso J."/>
            <person name="Kitamura H."/>
            <person name="Kitano H."/>
            <person name="Kollias G."/>
            <person name="Krishnan S.P."/>
            <person name="Kruger A."/>
            <person name="Kummerfeld S.K."/>
            <person name="Kurochkin I.V."/>
            <person name="Lareau L.F."/>
            <person name="Lazarevic D."/>
            <person name="Lipovich L."/>
            <person name="Liu J."/>
            <person name="Liuni S."/>
            <person name="McWilliam S."/>
            <person name="Madan Babu M."/>
            <person name="Madera M."/>
            <person name="Marchionni L."/>
            <person name="Matsuda H."/>
            <person name="Matsuzawa S."/>
            <person name="Miki H."/>
            <person name="Mignone F."/>
            <person name="Miyake S."/>
            <person name="Morris K."/>
            <person name="Mottagui-Tabar S."/>
            <person name="Mulder N."/>
            <person name="Nakano N."/>
            <person name="Nakauchi H."/>
            <person name="Ng P."/>
            <person name="Nilsson R."/>
            <person name="Nishiguchi S."/>
            <person name="Nishikawa S."/>
            <person name="Nori F."/>
            <person name="Ohara O."/>
            <person name="Okazaki Y."/>
            <person name="Orlando V."/>
            <person name="Pang K.C."/>
            <person name="Pavan W.J."/>
            <person name="Pavesi G."/>
            <person name="Pesole G."/>
            <person name="Petrovsky N."/>
            <person name="Piazza S."/>
            <person name="Reed J."/>
            <person name="Reid J.F."/>
            <person name="Ring B.Z."/>
            <person name="Ringwald M."/>
            <person name="Rost B."/>
            <person name="Ruan Y."/>
            <person name="Salzberg S.L."/>
            <person name="Sandelin A."/>
            <person name="Schneider C."/>
            <person name="Schoenbach C."/>
            <person name="Sekiguchi K."/>
            <person name="Semple C.A."/>
            <person name="Seno S."/>
            <person name="Sessa L."/>
            <person name="Sheng Y."/>
            <person name="Shibata Y."/>
            <person name="Shimada H."/>
            <person name="Shimada K."/>
            <person name="Silva D."/>
            <person name="Sinclair B."/>
            <person name="Sperling S."/>
            <person name="Stupka E."/>
            <person name="Sugiura K."/>
            <person name="Sultana R."/>
            <person name="Takenaka Y."/>
            <person name="Taki K."/>
            <person name="Tammoja K."/>
            <person name="Tan S.L."/>
            <person name="Tang S."/>
            <person name="Taylor M.S."/>
            <person name="Tegner J."/>
            <person name="Teichmann S.A."/>
            <person name="Ueda H.R."/>
            <person name="van Nimwegen E."/>
            <person name="Verardo R."/>
            <person name="Wei C.L."/>
            <person name="Yagi K."/>
            <person name="Yamanishi H."/>
            <person name="Zabarovsky E."/>
            <person name="Zhu S."/>
            <person name="Zimmer A."/>
            <person name="Hide W."/>
            <person name="Bult C."/>
            <person name="Grimmond S.M."/>
            <person name="Teasdale R.D."/>
            <person name="Liu E.T."/>
            <person name="Brusic V."/>
            <person name="Quackenbush J."/>
            <person name="Wahlestedt C."/>
            <person name="Mattick J.S."/>
            <person name="Hume D.A."/>
            <person name="Kai C."/>
            <person name="Sasaki D."/>
            <person name="Tomaru Y."/>
            <person name="Fukuda S."/>
            <person name="Kanamori-Katayama M."/>
            <person name="Suzuki M."/>
            <person name="Aoki J."/>
            <person name="Arakawa T."/>
            <person name="Iida J."/>
            <person name="Imamura K."/>
            <person name="Itoh M."/>
            <person name="Kato T."/>
            <person name="Kawaji H."/>
            <person name="Kawagashira N."/>
            <person name="Kawashima T."/>
            <person name="Kojima M."/>
            <person name="Kondo S."/>
            <person name="Konno H."/>
            <person name="Nakano K."/>
            <person name="Ninomiya N."/>
            <person name="Nishio T."/>
            <person name="Okada M."/>
            <person name="Plessy C."/>
            <person name="Shibata K."/>
            <person name="Shiraki T."/>
            <person name="Suzuki S."/>
            <person name="Tagami M."/>
            <person name="Waki K."/>
            <person name="Watahiki A."/>
            <person name="Okamura-Oho Y."/>
            <person name="Suzuki H."/>
            <person name="Kawai J."/>
            <person name="Hayashizaki Y."/>
        </authorList>
    </citation>
    <scope>NUCLEOTIDE SEQUENCE [LARGE SCALE MRNA]</scope>
    <source>
        <strain>C57BL/6J</strain>
        <tissue>Pancreas</tissue>
    </source>
</reference>
<reference key="3">
    <citation type="journal article" date="2004" name="Genome Res.">
        <title>The status, quality, and expansion of the NIH full-length cDNA project: the Mammalian Gene Collection (MGC).</title>
        <authorList>
            <consortium name="The MGC Project Team"/>
        </authorList>
    </citation>
    <scope>NUCLEOTIDE SEQUENCE [LARGE SCALE MRNA]</scope>
    <source>
        <strain>C57BL/6J</strain>
        <tissue>Mammary gland</tissue>
    </source>
</reference>
<reference key="4">
    <citation type="journal article" date="2010" name="Cell">
        <title>A tissue-specific atlas of mouse protein phosphorylation and expression.</title>
        <authorList>
            <person name="Huttlin E.L."/>
            <person name="Jedrychowski M.P."/>
            <person name="Elias J.E."/>
            <person name="Goswami T."/>
            <person name="Rad R."/>
            <person name="Beausoleil S.A."/>
            <person name="Villen J."/>
            <person name="Haas W."/>
            <person name="Sowa M.E."/>
            <person name="Gygi S.P."/>
        </authorList>
    </citation>
    <scope>IDENTIFICATION BY MASS SPECTROMETRY [LARGE SCALE ANALYSIS]</scope>
    <source>
        <tissue>Lung</tissue>
        <tissue>Spleen</tissue>
        <tissue>Testis</tissue>
    </source>
</reference>
<reference key="5">
    <citation type="journal article" date="2016" name="J. Immunol.">
        <title>POSH regulates CD4+ T cell differentiation and survival.</title>
        <authorList>
            <person name="Cunningham C.A."/>
            <person name="Cardwell L.N."/>
            <person name="Guan Y."/>
            <person name="Teixeiro E."/>
            <person name="Daniels M.A."/>
        </authorList>
    </citation>
    <scope>IDENTIFICATION IN A COMPLEX WITH SH3RF1; MAP3K7; MAP2K7; MAPK8IP1; MAPK8 AND MAPK9</scope>
</reference>
<proteinExistence type="evidence at protein level"/>
<organism>
    <name type="scientific">Mus musculus</name>
    <name type="common">Mouse</name>
    <dbReference type="NCBI Taxonomy" id="10090"/>
    <lineage>
        <taxon>Eukaryota</taxon>
        <taxon>Metazoa</taxon>
        <taxon>Chordata</taxon>
        <taxon>Craniata</taxon>
        <taxon>Vertebrata</taxon>
        <taxon>Euteleostomi</taxon>
        <taxon>Mammalia</taxon>
        <taxon>Eutheria</taxon>
        <taxon>Euarchontoglires</taxon>
        <taxon>Glires</taxon>
        <taxon>Rodentia</taxon>
        <taxon>Myomorpha</taxon>
        <taxon>Muroidea</taxon>
        <taxon>Muridae</taxon>
        <taxon>Murinae</taxon>
        <taxon>Mus</taxon>
        <taxon>Mus</taxon>
    </lineage>
</organism>
<protein>
    <recommendedName>
        <fullName evidence="5">Ras-related C3 botulinum toxin substrate 2</fullName>
        <ecNumber evidence="2">3.6.5.2</ecNumber>
    </recommendedName>
    <alternativeName>
        <fullName>Protein EN-7</fullName>
    </alternativeName>
    <alternativeName>
        <fullName>p21-Rac2</fullName>
    </alternativeName>
</protein>
<evidence type="ECO:0000250" key="1"/>
<evidence type="ECO:0000250" key="2">
    <source>
        <dbReference type="UniProtKB" id="P15153"/>
    </source>
</evidence>
<evidence type="ECO:0000255" key="3"/>
<evidence type="ECO:0000269" key="4">
    <source>
    </source>
</evidence>
<evidence type="ECO:0000305" key="5"/>
<evidence type="ECO:0000312" key="6">
    <source>
        <dbReference type="MGI" id="MGI:97846"/>
    </source>
</evidence>
<sequence length="192" mass="21441">MQAIKCVVVGDGAVGKTCLLISYTTNAFPGEYIPTVFDNYSANVMVDSKPVNLGLWDTAGQEDYDRLRPLSYPQTDVFLICFSLVSPASYENVRAKWFPEVRHHCPSTPIILVGTKLDLRDDKDTIEKLKEKKLAPITYPQGLALAKDIDSVKYLECSALTQRGLKTVFDEAIRAVLCPQPTRQQKRPCSLL</sequence>
<name>RAC2_MOUSE</name>
<accession>Q05144</accession>
<accession>Q3TBC4</accession>
<accession>Q9D8X9</accession>
<feature type="chain" id="PRO_0000042048" description="Ras-related C3 botulinum toxin substrate 2">
    <location>
        <begin position="1"/>
        <end position="189"/>
    </location>
</feature>
<feature type="propeptide" id="PRO_0000042049" description="Removed in mature form" evidence="1">
    <location>
        <begin position="190"/>
        <end position="192"/>
    </location>
</feature>
<feature type="short sequence motif" description="Effector region" evidence="3">
    <location>
        <begin position="32"/>
        <end position="40"/>
    </location>
</feature>
<feature type="binding site" evidence="1">
    <location>
        <begin position="10"/>
        <end position="17"/>
    </location>
    <ligand>
        <name>GTP</name>
        <dbReference type="ChEBI" id="CHEBI:37565"/>
    </ligand>
</feature>
<feature type="binding site" evidence="1">
    <location>
        <begin position="57"/>
        <end position="61"/>
    </location>
    <ligand>
        <name>GTP</name>
        <dbReference type="ChEBI" id="CHEBI:37565"/>
    </ligand>
</feature>
<feature type="binding site" evidence="1">
    <location>
        <begin position="115"/>
        <end position="118"/>
    </location>
    <ligand>
        <name>GTP</name>
        <dbReference type="ChEBI" id="CHEBI:37565"/>
    </ligand>
</feature>
<feature type="modified residue" description="N6-acetyllysine" evidence="2">
    <location>
        <position position="147"/>
    </location>
</feature>
<feature type="modified residue" description="Cysteine methyl ester" evidence="1">
    <location>
        <position position="189"/>
    </location>
</feature>
<feature type="lipid moiety-binding region" description="S-geranylgeranyl cysteine" evidence="1">
    <location>
        <position position="189"/>
    </location>
</feature>
<feature type="sequence conflict" description="In Ref. 2; BAB25109." evidence="5" ref="2">
    <original>G</original>
    <variation>V</variation>
    <location>
        <position position="60"/>
    </location>
</feature>
<dbReference type="EC" id="3.6.5.2" evidence="2"/>
<dbReference type="EMBL" id="X53247">
    <property type="protein sequence ID" value="CAA37337.1"/>
    <property type="molecule type" value="mRNA"/>
</dbReference>
<dbReference type="EMBL" id="AK007561">
    <property type="protein sequence ID" value="BAB25109.1"/>
    <property type="molecule type" value="mRNA"/>
</dbReference>
<dbReference type="EMBL" id="AK144136">
    <property type="protein sequence ID" value="BAE25721.1"/>
    <property type="molecule type" value="mRNA"/>
</dbReference>
<dbReference type="EMBL" id="AK171321">
    <property type="protein sequence ID" value="BAE42390.1"/>
    <property type="molecule type" value="mRNA"/>
</dbReference>
<dbReference type="EMBL" id="BC005455">
    <property type="protein sequence ID" value="AAH05455.1"/>
    <property type="molecule type" value="mRNA"/>
</dbReference>
<dbReference type="CCDS" id="CCDS27619.1"/>
<dbReference type="PIR" id="A60194">
    <property type="entry name" value="A60194"/>
</dbReference>
<dbReference type="RefSeq" id="NP_033034.1">
    <property type="nucleotide sequence ID" value="NM_009008.3"/>
</dbReference>
<dbReference type="SMR" id="Q05144"/>
<dbReference type="BioGRID" id="202557">
    <property type="interactions" value="8"/>
</dbReference>
<dbReference type="CORUM" id="Q05144"/>
<dbReference type="DIP" id="DIP-41834N"/>
<dbReference type="FunCoup" id="Q05144">
    <property type="interactions" value="1603"/>
</dbReference>
<dbReference type="IntAct" id="Q05144">
    <property type="interactions" value="4"/>
</dbReference>
<dbReference type="MINT" id="Q05144"/>
<dbReference type="STRING" id="10090.ENSMUSP00000036384"/>
<dbReference type="ChEMBL" id="CHEMBL4523277"/>
<dbReference type="GlyGen" id="Q05144">
    <property type="glycosylation" value="1 site, 1 O-linked glycan (1 site)"/>
</dbReference>
<dbReference type="iPTMnet" id="Q05144"/>
<dbReference type="PhosphoSitePlus" id="Q05144"/>
<dbReference type="SwissPalm" id="Q05144"/>
<dbReference type="jPOST" id="Q05144"/>
<dbReference type="PaxDb" id="10090-ENSMUSP00000036384"/>
<dbReference type="PeptideAtlas" id="Q05144"/>
<dbReference type="ProteomicsDB" id="300294"/>
<dbReference type="Pumba" id="Q05144"/>
<dbReference type="Antibodypedia" id="25898">
    <property type="antibodies" value="390 antibodies from 34 providers"/>
</dbReference>
<dbReference type="DNASU" id="19354"/>
<dbReference type="Ensembl" id="ENSMUST00000043214.8">
    <property type="protein sequence ID" value="ENSMUSP00000036384.7"/>
    <property type="gene ID" value="ENSMUSG00000033220.8"/>
</dbReference>
<dbReference type="GeneID" id="19354"/>
<dbReference type="KEGG" id="mmu:19354"/>
<dbReference type="UCSC" id="uc007wpp.1">
    <property type="organism name" value="mouse"/>
</dbReference>
<dbReference type="AGR" id="MGI:97846"/>
<dbReference type="CTD" id="5880"/>
<dbReference type="MGI" id="MGI:97846">
    <property type="gene designation" value="Rac2"/>
</dbReference>
<dbReference type="VEuPathDB" id="HostDB:ENSMUSG00000033220"/>
<dbReference type="eggNOG" id="KOG0393">
    <property type="taxonomic scope" value="Eukaryota"/>
</dbReference>
<dbReference type="GeneTree" id="ENSGT00940000155205"/>
<dbReference type="HOGENOM" id="CLU_041217_21_3_1"/>
<dbReference type="InParanoid" id="Q05144"/>
<dbReference type="OMA" id="MGANVIT"/>
<dbReference type="OrthoDB" id="8830751at2759"/>
<dbReference type="PhylomeDB" id="Q05144"/>
<dbReference type="TreeFam" id="TF101109"/>
<dbReference type="Reactome" id="R-MMU-114604">
    <property type="pathway name" value="GPVI-mediated activation cascade"/>
</dbReference>
<dbReference type="Reactome" id="R-MMU-1222556">
    <property type="pathway name" value="ROS and RNS production in phagocytes"/>
</dbReference>
<dbReference type="Reactome" id="R-MMU-1257604">
    <property type="pathway name" value="PIP3 activates AKT signaling"/>
</dbReference>
<dbReference type="Reactome" id="R-MMU-4086400">
    <property type="pathway name" value="PCP/CE pathway"/>
</dbReference>
<dbReference type="Reactome" id="R-MMU-5668599">
    <property type="pathway name" value="RHO GTPases Activate NADPH Oxidases"/>
</dbReference>
<dbReference type="Reactome" id="R-MMU-6811558">
    <property type="pathway name" value="PI5P, PP2A and IER3 Regulate PI3K/AKT Signaling"/>
</dbReference>
<dbReference type="Reactome" id="R-MMU-9013404">
    <property type="pathway name" value="RAC2 GTPase cycle"/>
</dbReference>
<dbReference type="BioGRID-ORCS" id="19354">
    <property type="hits" value="5 hits in 79 CRISPR screens"/>
</dbReference>
<dbReference type="ChiTaRS" id="Rac2">
    <property type="organism name" value="mouse"/>
</dbReference>
<dbReference type="PRO" id="PR:Q05144"/>
<dbReference type="Proteomes" id="UP000000589">
    <property type="component" value="Chromosome 15"/>
</dbReference>
<dbReference type="RNAct" id="Q05144">
    <property type="molecule type" value="protein"/>
</dbReference>
<dbReference type="Bgee" id="ENSMUSG00000033220">
    <property type="expression patterns" value="Expressed in granulocyte and 129 other cell types or tissues"/>
</dbReference>
<dbReference type="ExpressionAtlas" id="Q05144">
    <property type="expression patterns" value="baseline and differential"/>
</dbReference>
<dbReference type="GO" id="GO:0005884">
    <property type="term" value="C:actin filament"/>
    <property type="evidence" value="ECO:0007669"/>
    <property type="project" value="Ensembl"/>
</dbReference>
<dbReference type="GO" id="GO:0005737">
    <property type="term" value="C:cytoplasm"/>
    <property type="evidence" value="ECO:0000314"/>
    <property type="project" value="MGI"/>
</dbReference>
<dbReference type="GO" id="GO:0005829">
    <property type="term" value="C:cytosol"/>
    <property type="evidence" value="ECO:0007669"/>
    <property type="project" value="Ensembl"/>
</dbReference>
<dbReference type="GO" id="GO:0030027">
    <property type="term" value="C:lamellipodium"/>
    <property type="evidence" value="ECO:0007669"/>
    <property type="project" value="Ensembl"/>
</dbReference>
<dbReference type="GO" id="GO:0016020">
    <property type="term" value="C:membrane"/>
    <property type="evidence" value="ECO:0000314"/>
    <property type="project" value="MGI"/>
</dbReference>
<dbReference type="GO" id="GO:0043020">
    <property type="term" value="C:NADPH oxidase complex"/>
    <property type="evidence" value="ECO:0007669"/>
    <property type="project" value="Ensembl"/>
</dbReference>
<dbReference type="GO" id="GO:0005635">
    <property type="term" value="C:nuclear envelope"/>
    <property type="evidence" value="ECO:0000314"/>
    <property type="project" value="MGI"/>
</dbReference>
<dbReference type="GO" id="GO:0005525">
    <property type="term" value="F:GTP binding"/>
    <property type="evidence" value="ECO:0007669"/>
    <property type="project" value="UniProtKB-KW"/>
</dbReference>
<dbReference type="GO" id="GO:0003924">
    <property type="term" value="F:GTPase activity"/>
    <property type="evidence" value="ECO:0000314"/>
    <property type="project" value="MGI"/>
</dbReference>
<dbReference type="GO" id="GO:0019887">
    <property type="term" value="F:protein kinase regulator activity"/>
    <property type="evidence" value="ECO:0000315"/>
    <property type="project" value="CACAO"/>
</dbReference>
<dbReference type="GO" id="GO:0030036">
    <property type="term" value="P:actin cytoskeleton organization"/>
    <property type="evidence" value="ECO:0000314"/>
    <property type="project" value="MGI"/>
</dbReference>
<dbReference type="GO" id="GO:0007015">
    <property type="term" value="P:actin filament organization"/>
    <property type="evidence" value="ECO:0007669"/>
    <property type="project" value="Ensembl"/>
</dbReference>
<dbReference type="GO" id="GO:0045453">
    <property type="term" value="P:bone resorption"/>
    <property type="evidence" value="ECO:0007669"/>
    <property type="project" value="Ensembl"/>
</dbReference>
<dbReference type="GO" id="GO:0008283">
    <property type="term" value="P:cell population proliferation"/>
    <property type="evidence" value="ECO:0000315"/>
    <property type="project" value="MGI"/>
</dbReference>
<dbReference type="GO" id="GO:0030031">
    <property type="term" value="P:cell projection assembly"/>
    <property type="evidence" value="ECO:0000314"/>
    <property type="project" value="MGI"/>
</dbReference>
<dbReference type="GO" id="GO:0006935">
    <property type="term" value="P:chemotaxis"/>
    <property type="evidence" value="ECO:0000314"/>
    <property type="project" value="MGI"/>
</dbReference>
<dbReference type="GO" id="GO:0043131">
    <property type="term" value="P:erythrocyte enucleation"/>
    <property type="evidence" value="ECO:0000315"/>
    <property type="project" value="MGI"/>
</dbReference>
<dbReference type="GO" id="GO:0007186">
    <property type="term" value="P:G protein-coupled receptor signaling pathway"/>
    <property type="evidence" value="ECO:0000316"/>
    <property type="project" value="MGI"/>
</dbReference>
<dbReference type="GO" id="GO:0071593">
    <property type="term" value="P:lymphocyte aggregation"/>
    <property type="evidence" value="ECO:0007669"/>
    <property type="project" value="Ensembl"/>
</dbReference>
<dbReference type="GO" id="GO:0070662">
    <property type="term" value="P:mast cell proliferation"/>
    <property type="evidence" value="ECO:0000315"/>
    <property type="project" value="MGI"/>
</dbReference>
<dbReference type="GO" id="GO:0010592">
    <property type="term" value="P:positive regulation of lamellipodium assembly"/>
    <property type="evidence" value="ECO:0000315"/>
    <property type="project" value="UniProtKB"/>
</dbReference>
<dbReference type="GO" id="GO:0070668">
    <property type="term" value="P:positive regulation of mast cell proliferation"/>
    <property type="evidence" value="ECO:0000315"/>
    <property type="project" value="MGI"/>
</dbReference>
<dbReference type="GO" id="GO:0090023">
    <property type="term" value="P:positive regulation of neutrophil chemotaxis"/>
    <property type="evidence" value="ECO:0000315"/>
    <property type="project" value="UniProtKB"/>
</dbReference>
<dbReference type="GO" id="GO:0010810">
    <property type="term" value="P:regulation of cell-substrate adhesion"/>
    <property type="evidence" value="ECO:0007669"/>
    <property type="project" value="Ensembl"/>
</dbReference>
<dbReference type="GO" id="GO:0060753">
    <property type="term" value="P:regulation of mast cell chemotaxis"/>
    <property type="evidence" value="ECO:0000315"/>
    <property type="project" value="CACAO"/>
</dbReference>
<dbReference type="GO" id="GO:0043304">
    <property type="term" value="P:regulation of mast cell degranulation"/>
    <property type="evidence" value="ECO:0000315"/>
    <property type="project" value="CACAO"/>
</dbReference>
<dbReference type="GO" id="GO:0060263">
    <property type="term" value="P:regulation of respiratory burst"/>
    <property type="evidence" value="ECO:0007669"/>
    <property type="project" value="Ensembl"/>
</dbReference>
<dbReference type="GO" id="GO:0042129">
    <property type="term" value="P:regulation of T cell proliferation"/>
    <property type="evidence" value="ECO:0000315"/>
    <property type="project" value="CACAO"/>
</dbReference>
<dbReference type="GO" id="GO:0007264">
    <property type="term" value="P:small GTPase-mediated signal transduction"/>
    <property type="evidence" value="ECO:0007669"/>
    <property type="project" value="InterPro"/>
</dbReference>
<dbReference type="GO" id="GO:0042554">
    <property type="term" value="P:superoxide anion generation"/>
    <property type="evidence" value="ECO:0007669"/>
    <property type="project" value="Ensembl"/>
</dbReference>
<dbReference type="CDD" id="cd01871">
    <property type="entry name" value="Rac1_like"/>
    <property type="match status" value="1"/>
</dbReference>
<dbReference type="FunFam" id="3.40.50.300:FF:000088">
    <property type="entry name" value="Ras-related C3 botulinum toxin substrate 1"/>
    <property type="match status" value="1"/>
</dbReference>
<dbReference type="Gene3D" id="3.40.50.300">
    <property type="entry name" value="P-loop containing nucleotide triphosphate hydrolases"/>
    <property type="match status" value="1"/>
</dbReference>
<dbReference type="InterPro" id="IPR027417">
    <property type="entry name" value="P-loop_NTPase"/>
</dbReference>
<dbReference type="InterPro" id="IPR005225">
    <property type="entry name" value="Small_GTP-bd"/>
</dbReference>
<dbReference type="InterPro" id="IPR001806">
    <property type="entry name" value="Small_GTPase"/>
</dbReference>
<dbReference type="InterPro" id="IPR003578">
    <property type="entry name" value="Small_GTPase_Rho"/>
</dbReference>
<dbReference type="NCBIfam" id="TIGR00231">
    <property type="entry name" value="small_GTP"/>
    <property type="match status" value="1"/>
</dbReference>
<dbReference type="PANTHER" id="PTHR24072">
    <property type="entry name" value="RHO FAMILY GTPASE"/>
    <property type="match status" value="1"/>
</dbReference>
<dbReference type="Pfam" id="PF00071">
    <property type="entry name" value="Ras"/>
    <property type="match status" value="1"/>
</dbReference>
<dbReference type="PRINTS" id="PR00449">
    <property type="entry name" value="RASTRNSFRMNG"/>
</dbReference>
<dbReference type="SMART" id="SM00175">
    <property type="entry name" value="RAB"/>
    <property type="match status" value="1"/>
</dbReference>
<dbReference type="SMART" id="SM00176">
    <property type="entry name" value="RAN"/>
    <property type="match status" value="1"/>
</dbReference>
<dbReference type="SMART" id="SM00173">
    <property type="entry name" value="RAS"/>
    <property type="match status" value="1"/>
</dbReference>
<dbReference type="SMART" id="SM00174">
    <property type="entry name" value="RHO"/>
    <property type="match status" value="1"/>
</dbReference>
<dbReference type="SUPFAM" id="SSF52540">
    <property type="entry name" value="P-loop containing nucleoside triphosphate hydrolases"/>
    <property type="match status" value="1"/>
</dbReference>
<dbReference type="PROSITE" id="PS51420">
    <property type="entry name" value="RHO"/>
    <property type="match status" value="1"/>
</dbReference>
<keyword id="KW-0007">Acetylation</keyword>
<keyword id="KW-0963">Cytoplasm</keyword>
<keyword id="KW-0342">GTP-binding</keyword>
<keyword id="KW-0378">Hydrolase</keyword>
<keyword id="KW-0449">Lipoprotein</keyword>
<keyword id="KW-0472">Membrane</keyword>
<keyword id="KW-0488">Methylation</keyword>
<keyword id="KW-0547">Nucleotide-binding</keyword>
<keyword id="KW-0636">Prenylation</keyword>
<keyword id="KW-1185">Reference proteome</keyword>
<comment type="function">
    <text evidence="2">Plasma membrane-associated small GTPase which cycles between an active GTP-bound and inactive GDP-bound state. In its active state, binds to a variety of effector proteins to regulate cellular responses, such as secretory processes, phagocytose of apoptotic cells and epithelial cell polarization. Regulatory subunit of the phagocyte NADPH oxidase complex that mediates the transfer of electrons from cytosolic NADPH to O2 to produce the superoxide anion (O2(-)).</text>
</comment>
<comment type="catalytic activity">
    <reaction evidence="2">
        <text>GTP + H2O = GDP + phosphate + H(+)</text>
        <dbReference type="Rhea" id="RHEA:19669"/>
        <dbReference type="ChEBI" id="CHEBI:15377"/>
        <dbReference type="ChEBI" id="CHEBI:15378"/>
        <dbReference type="ChEBI" id="CHEBI:37565"/>
        <dbReference type="ChEBI" id="CHEBI:43474"/>
        <dbReference type="ChEBI" id="CHEBI:58189"/>
        <dbReference type="EC" id="3.6.5.2"/>
    </reaction>
    <physiologicalReaction direction="left-to-right" evidence="2">
        <dbReference type="Rhea" id="RHEA:19670"/>
    </physiologicalReaction>
</comment>
<comment type="activity regulation">
    <text evidence="2">Regulated by guanine nucleotide exchange factors (GEFs) which promote the exchange of bound GDP for free GTP, GTPase activating proteins (GAPs) which increase the GTP hydrolysis activity, and GDP dissociation inhibitors which inhibit the dissociation of the nucleotide from the GTPase.</text>
</comment>
<comment type="subunit">
    <text evidence="2 4">Interacts with DOCK2, which may activate it. Interacts with S100A8 and calprotectin (S100A8/9) (By similarity). Found in a complex with SH3RF1, MAP3K7/TAK1, MAP2K7/MKK7, MAPK8IP1/JIP1, MAPK8/JNK1 and MAPK9/JNK2 (PubMed:27084103). Interacts with PAK1 (By similarity). Component of the phagocyte NADPH oxidase complex composed of an obligatory core heterodimer formed by the membrane proteins CYBA and CYBB and the cytosolic regulatory subunits NCF1/p47-phox, NCF2/p67-phox, NCF4/p40-phox and the small GTPase RAC1 or RAC2 (By similarity).</text>
</comment>
<comment type="subcellular location">
    <subcellularLocation>
        <location evidence="1">Cytoplasm</location>
    </subcellularLocation>
    <subcellularLocation>
        <location evidence="1">Membrane</location>
        <topology evidence="1">Lipid-anchor</topology>
    </subcellularLocation>
    <text evidence="1">Membrane-associated when activated.</text>
</comment>
<comment type="similarity">
    <text evidence="5">Belongs to the small GTPase superfamily. Rho family.</text>
</comment>